<name>MIAB_CLOPS</name>
<gene>
    <name evidence="1" type="primary">miaB</name>
    <name type="ordered locus">CPR_1156</name>
</gene>
<feature type="chain" id="PRO_0000374232" description="tRNA-2-methylthio-N(6)-dimethylallyladenosine synthase">
    <location>
        <begin position="1"/>
        <end position="447"/>
    </location>
</feature>
<feature type="domain" description="MTTase N-terminal" evidence="1">
    <location>
        <begin position="10"/>
        <end position="128"/>
    </location>
</feature>
<feature type="domain" description="Radical SAM core" evidence="2">
    <location>
        <begin position="151"/>
        <end position="382"/>
    </location>
</feature>
<feature type="domain" description="TRAM" evidence="1">
    <location>
        <begin position="384"/>
        <end position="447"/>
    </location>
</feature>
<feature type="binding site" evidence="1">
    <location>
        <position position="19"/>
    </location>
    <ligand>
        <name>[4Fe-4S] cluster</name>
        <dbReference type="ChEBI" id="CHEBI:49883"/>
        <label>1</label>
    </ligand>
</feature>
<feature type="binding site" evidence="1">
    <location>
        <position position="55"/>
    </location>
    <ligand>
        <name>[4Fe-4S] cluster</name>
        <dbReference type="ChEBI" id="CHEBI:49883"/>
        <label>1</label>
    </ligand>
</feature>
<feature type="binding site" evidence="1">
    <location>
        <position position="89"/>
    </location>
    <ligand>
        <name>[4Fe-4S] cluster</name>
        <dbReference type="ChEBI" id="CHEBI:49883"/>
        <label>1</label>
    </ligand>
</feature>
<feature type="binding site" evidence="1">
    <location>
        <position position="165"/>
    </location>
    <ligand>
        <name>[4Fe-4S] cluster</name>
        <dbReference type="ChEBI" id="CHEBI:49883"/>
        <label>2</label>
        <note>4Fe-4S-S-AdoMet</note>
    </ligand>
</feature>
<feature type="binding site" evidence="1">
    <location>
        <position position="169"/>
    </location>
    <ligand>
        <name>[4Fe-4S] cluster</name>
        <dbReference type="ChEBI" id="CHEBI:49883"/>
        <label>2</label>
        <note>4Fe-4S-S-AdoMet</note>
    </ligand>
</feature>
<feature type="binding site" evidence="1">
    <location>
        <position position="172"/>
    </location>
    <ligand>
        <name>[4Fe-4S] cluster</name>
        <dbReference type="ChEBI" id="CHEBI:49883"/>
        <label>2</label>
        <note>4Fe-4S-S-AdoMet</note>
    </ligand>
</feature>
<proteinExistence type="inferred from homology"/>
<organism>
    <name type="scientific">Clostridium perfringens (strain SM101 / Type A)</name>
    <dbReference type="NCBI Taxonomy" id="289380"/>
    <lineage>
        <taxon>Bacteria</taxon>
        <taxon>Bacillati</taxon>
        <taxon>Bacillota</taxon>
        <taxon>Clostridia</taxon>
        <taxon>Eubacteriales</taxon>
        <taxon>Clostridiaceae</taxon>
        <taxon>Clostridium</taxon>
    </lineage>
</organism>
<keyword id="KW-0004">4Fe-4S</keyword>
<keyword id="KW-0963">Cytoplasm</keyword>
<keyword id="KW-0408">Iron</keyword>
<keyword id="KW-0411">Iron-sulfur</keyword>
<keyword id="KW-0479">Metal-binding</keyword>
<keyword id="KW-0949">S-adenosyl-L-methionine</keyword>
<keyword id="KW-0808">Transferase</keyword>
<keyword id="KW-0819">tRNA processing</keyword>
<sequence length="447" mass="51040">MTLENNMDKKLFCISTYGCQMNEEDSEKLSGMLKSQGYERTENKEEASIIIFNTCCVRENAENKVFGNLGQLKQLKKKNPNLVIAICGCMMQQVGMADKVLKTFPYVDIIFGTHNAHKFPEYLHRVLQEGVQVKEILNKEEGIVEGLPIDRKSDVKAFVTIMYGCNNFCTYCIVPYVRGRERSRKSEDIIKEIEELVSKGYKEITLLGQNVNSYGKGLEEDIDFAGLLRKVNEVKGLERVRFMTSHPKDLSDDVIMAIKECDKLCEQVHLPVQSGSSRILKEMNRHYDREYYLDLVKKIKSEIPDVTLTTDIIIGFPGETEEDFLDTLSLCEEVGYDSAFTFIYSRRNHTPADKMENQIPDDIKHDRFNRLVEAINKKVVIKNKEYEGKVVEVLVEGPSKNDETKLTGRTRNGKLVNFAGDEKLVGELVNLKIVRAQPFSLIGEIVE</sequence>
<dbReference type="EC" id="2.8.4.3" evidence="1"/>
<dbReference type="EMBL" id="CP000312">
    <property type="protein sequence ID" value="ABG87424.1"/>
    <property type="molecule type" value="Genomic_DNA"/>
</dbReference>
<dbReference type="RefSeq" id="WP_011592162.1">
    <property type="nucleotide sequence ID" value="NC_008262.1"/>
</dbReference>
<dbReference type="SMR" id="Q0STS9"/>
<dbReference type="KEGG" id="cpr:CPR_1156"/>
<dbReference type="Proteomes" id="UP000001824">
    <property type="component" value="Chromosome"/>
</dbReference>
<dbReference type="GO" id="GO:0005829">
    <property type="term" value="C:cytosol"/>
    <property type="evidence" value="ECO:0007669"/>
    <property type="project" value="TreeGrafter"/>
</dbReference>
<dbReference type="GO" id="GO:0051539">
    <property type="term" value="F:4 iron, 4 sulfur cluster binding"/>
    <property type="evidence" value="ECO:0007669"/>
    <property type="project" value="UniProtKB-UniRule"/>
</dbReference>
<dbReference type="GO" id="GO:0046872">
    <property type="term" value="F:metal ion binding"/>
    <property type="evidence" value="ECO:0007669"/>
    <property type="project" value="UniProtKB-KW"/>
</dbReference>
<dbReference type="GO" id="GO:0035597">
    <property type="term" value="F:N6-isopentenyladenosine methylthiotransferase activity"/>
    <property type="evidence" value="ECO:0007669"/>
    <property type="project" value="TreeGrafter"/>
</dbReference>
<dbReference type="CDD" id="cd01335">
    <property type="entry name" value="Radical_SAM"/>
    <property type="match status" value="1"/>
</dbReference>
<dbReference type="FunFam" id="3.40.50.12160:FF:000006">
    <property type="entry name" value="tRNA-2-methylthio-N(6)-dimethylallyladenosine synthase"/>
    <property type="match status" value="1"/>
</dbReference>
<dbReference type="FunFam" id="3.80.30.20:FF:000001">
    <property type="entry name" value="tRNA-2-methylthio-N(6)-dimethylallyladenosine synthase 2"/>
    <property type="match status" value="1"/>
</dbReference>
<dbReference type="Gene3D" id="3.40.50.12160">
    <property type="entry name" value="Methylthiotransferase, N-terminal domain"/>
    <property type="match status" value="1"/>
</dbReference>
<dbReference type="Gene3D" id="3.80.30.20">
    <property type="entry name" value="tm_1862 like domain"/>
    <property type="match status" value="1"/>
</dbReference>
<dbReference type="HAMAP" id="MF_01864">
    <property type="entry name" value="tRNA_metthiotr_MiaB"/>
    <property type="match status" value="1"/>
</dbReference>
<dbReference type="InterPro" id="IPR006638">
    <property type="entry name" value="Elp3/MiaA/NifB-like_rSAM"/>
</dbReference>
<dbReference type="InterPro" id="IPR005839">
    <property type="entry name" value="Methylthiotransferase"/>
</dbReference>
<dbReference type="InterPro" id="IPR020612">
    <property type="entry name" value="Methylthiotransferase_CS"/>
</dbReference>
<dbReference type="InterPro" id="IPR013848">
    <property type="entry name" value="Methylthiotransferase_N"/>
</dbReference>
<dbReference type="InterPro" id="IPR038135">
    <property type="entry name" value="Methylthiotransferase_N_sf"/>
</dbReference>
<dbReference type="InterPro" id="IPR006463">
    <property type="entry name" value="MiaB_methiolase"/>
</dbReference>
<dbReference type="InterPro" id="IPR007197">
    <property type="entry name" value="rSAM"/>
</dbReference>
<dbReference type="InterPro" id="IPR023404">
    <property type="entry name" value="rSAM_horseshoe"/>
</dbReference>
<dbReference type="InterPro" id="IPR002792">
    <property type="entry name" value="TRAM_dom"/>
</dbReference>
<dbReference type="NCBIfam" id="TIGR01574">
    <property type="entry name" value="miaB-methiolase"/>
    <property type="match status" value="1"/>
</dbReference>
<dbReference type="NCBIfam" id="TIGR00089">
    <property type="entry name" value="MiaB/RimO family radical SAM methylthiotransferase"/>
    <property type="match status" value="1"/>
</dbReference>
<dbReference type="PANTHER" id="PTHR43020">
    <property type="entry name" value="CDK5 REGULATORY SUBUNIT-ASSOCIATED PROTEIN 1"/>
    <property type="match status" value="1"/>
</dbReference>
<dbReference type="PANTHER" id="PTHR43020:SF2">
    <property type="entry name" value="MITOCHONDRIAL TRNA METHYLTHIOTRANSFERASE CDK5RAP1"/>
    <property type="match status" value="1"/>
</dbReference>
<dbReference type="Pfam" id="PF04055">
    <property type="entry name" value="Radical_SAM"/>
    <property type="match status" value="1"/>
</dbReference>
<dbReference type="Pfam" id="PF01938">
    <property type="entry name" value="TRAM"/>
    <property type="match status" value="1"/>
</dbReference>
<dbReference type="Pfam" id="PF00919">
    <property type="entry name" value="UPF0004"/>
    <property type="match status" value="1"/>
</dbReference>
<dbReference type="SFLD" id="SFLDF00273">
    <property type="entry name" value="(dimethylallyl)adenosine_tRNA"/>
    <property type="match status" value="1"/>
</dbReference>
<dbReference type="SFLD" id="SFLDG01082">
    <property type="entry name" value="B12-binding_domain_containing"/>
    <property type="match status" value="1"/>
</dbReference>
<dbReference type="SFLD" id="SFLDS00029">
    <property type="entry name" value="Radical_SAM"/>
    <property type="match status" value="1"/>
</dbReference>
<dbReference type="SMART" id="SM00729">
    <property type="entry name" value="Elp3"/>
    <property type="match status" value="1"/>
</dbReference>
<dbReference type="SUPFAM" id="SSF102114">
    <property type="entry name" value="Radical SAM enzymes"/>
    <property type="match status" value="1"/>
</dbReference>
<dbReference type="PROSITE" id="PS51449">
    <property type="entry name" value="MTTASE_N"/>
    <property type="match status" value="1"/>
</dbReference>
<dbReference type="PROSITE" id="PS01278">
    <property type="entry name" value="MTTASE_RADICAL"/>
    <property type="match status" value="1"/>
</dbReference>
<dbReference type="PROSITE" id="PS51918">
    <property type="entry name" value="RADICAL_SAM"/>
    <property type="match status" value="1"/>
</dbReference>
<dbReference type="PROSITE" id="PS50926">
    <property type="entry name" value="TRAM"/>
    <property type="match status" value="1"/>
</dbReference>
<comment type="function">
    <text evidence="1">Catalyzes the methylthiolation of N6-(dimethylallyl)adenosine (i(6)A), leading to the formation of 2-methylthio-N6-(dimethylallyl)adenosine (ms(2)i(6)A) at position 37 in tRNAs that read codons beginning with uridine.</text>
</comment>
<comment type="catalytic activity">
    <reaction evidence="1">
        <text>N(6)-dimethylallyladenosine(37) in tRNA + (sulfur carrier)-SH + AH2 + 2 S-adenosyl-L-methionine = 2-methylsulfanyl-N(6)-dimethylallyladenosine(37) in tRNA + (sulfur carrier)-H + 5'-deoxyadenosine + L-methionine + A + S-adenosyl-L-homocysteine + 2 H(+)</text>
        <dbReference type="Rhea" id="RHEA:37067"/>
        <dbReference type="Rhea" id="RHEA-COMP:10375"/>
        <dbReference type="Rhea" id="RHEA-COMP:10376"/>
        <dbReference type="Rhea" id="RHEA-COMP:14737"/>
        <dbReference type="Rhea" id="RHEA-COMP:14739"/>
        <dbReference type="ChEBI" id="CHEBI:13193"/>
        <dbReference type="ChEBI" id="CHEBI:15378"/>
        <dbReference type="ChEBI" id="CHEBI:17319"/>
        <dbReference type="ChEBI" id="CHEBI:17499"/>
        <dbReference type="ChEBI" id="CHEBI:29917"/>
        <dbReference type="ChEBI" id="CHEBI:57844"/>
        <dbReference type="ChEBI" id="CHEBI:57856"/>
        <dbReference type="ChEBI" id="CHEBI:59789"/>
        <dbReference type="ChEBI" id="CHEBI:64428"/>
        <dbReference type="ChEBI" id="CHEBI:74415"/>
        <dbReference type="ChEBI" id="CHEBI:74417"/>
        <dbReference type="EC" id="2.8.4.3"/>
    </reaction>
</comment>
<comment type="cofactor">
    <cofactor evidence="1">
        <name>[4Fe-4S] cluster</name>
        <dbReference type="ChEBI" id="CHEBI:49883"/>
    </cofactor>
    <text evidence="1">Binds 2 [4Fe-4S] clusters. One cluster is coordinated with 3 cysteines and an exchangeable S-adenosyl-L-methionine.</text>
</comment>
<comment type="subunit">
    <text evidence="1">Monomer.</text>
</comment>
<comment type="subcellular location">
    <subcellularLocation>
        <location evidence="1">Cytoplasm</location>
    </subcellularLocation>
</comment>
<comment type="similarity">
    <text evidence="1">Belongs to the methylthiotransferase family. MiaB subfamily.</text>
</comment>
<reference key="1">
    <citation type="journal article" date="2006" name="Genome Res.">
        <title>Skewed genomic variability in strains of the toxigenic bacterial pathogen, Clostridium perfringens.</title>
        <authorList>
            <person name="Myers G.S.A."/>
            <person name="Rasko D.A."/>
            <person name="Cheung J.K."/>
            <person name="Ravel J."/>
            <person name="Seshadri R."/>
            <person name="DeBoy R.T."/>
            <person name="Ren Q."/>
            <person name="Varga J."/>
            <person name="Awad M.M."/>
            <person name="Brinkac L.M."/>
            <person name="Daugherty S.C."/>
            <person name="Haft D.H."/>
            <person name="Dodson R.J."/>
            <person name="Madupu R."/>
            <person name="Nelson W.C."/>
            <person name="Rosovitz M.J."/>
            <person name="Sullivan S.A."/>
            <person name="Khouri H."/>
            <person name="Dimitrov G.I."/>
            <person name="Watkins K.L."/>
            <person name="Mulligan S."/>
            <person name="Benton J."/>
            <person name="Radune D."/>
            <person name="Fisher D.J."/>
            <person name="Atkins H.S."/>
            <person name="Hiscox T."/>
            <person name="Jost B.H."/>
            <person name="Billington S.J."/>
            <person name="Songer J.G."/>
            <person name="McClane B.A."/>
            <person name="Titball R.W."/>
            <person name="Rood J.I."/>
            <person name="Melville S.B."/>
            <person name="Paulsen I.T."/>
        </authorList>
    </citation>
    <scope>NUCLEOTIDE SEQUENCE [LARGE SCALE GENOMIC DNA]</scope>
    <source>
        <strain>SM101 / Type A</strain>
    </source>
</reference>
<protein>
    <recommendedName>
        <fullName evidence="1">tRNA-2-methylthio-N(6)-dimethylallyladenosine synthase</fullName>
        <ecNumber evidence="1">2.8.4.3</ecNumber>
    </recommendedName>
    <alternativeName>
        <fullName evidence="1">(Dimethylallyl)adenosine tRNA methylthiotransferase MiaB</fullName>
    </alternativeName>
    <alternativeName>
        <fullName evidence="1">tRNA-i(6)A37 methylthiotransferase</fullName>
    </alternativeName>
</protein>
<accession>Q0STS9</accession>
<evidence type="ECO:0000255" key="1">
    <source>
        <dbReference type="HAMAP-Rule" id="MF_01864"/>
    </source>
</evidence>
<evidence type="ECO:0000255" key="2">
    <source>
        <dbReference type="PROSITE-ProRule" id="PRU01266"/>
    </source>
</evidence>